<protein>
    <recommendedName>
        <fullName evidence="1">tRNA-2-methylthio-N(6)-dimethylallyladenosine synthase</fullName>
        <ecNumber evidence="1">2.8.4.3</ecNumber>
    </recommendedName>
    <alternativeName>
        <fullName evidence="1">(Dimethylallyl)adenosine tRNA methylthiotransferase MiaB</fullName>
    </alternativeName>
    <alternativeName>
        <fullName evidence="1">tRNA-i(6)A37 methylthiotransferase</fullName>
    </alternativeName>
</protein>
<evidence type="ECO:0000255" key="1">
    <source>
        <dbReference type="HAMAP-Rule" id="MF_01864"/>
    </source>
</evidence>
<evidence type="ECO:0000255" key="2">
    <source>
        <dbReference type="PROSITE-ProRule" id="PRU01266"/>
    </source>
</evidence>
<proteinExistence type="inferred from homology"/>
<feature type="chain" id="PRO_0000374113" description="tRNA-2-methylthio-N(6)-dimethylallyladenosine synthase">
    <location>
        <begin position="1"/>
        <end position="455"/>
    </location>
</feature>
<feature type="domain" description="MTTase N-terminal" evidence="1">
    <location>
        <begin position="3"/>
        <end position="117"/>
    </location>
</feature>
<feature type="domain" description="Radical SAM core" evidence="2">
    <location>
        <begin position="141"/>
        <end position="375"/>
    </location>
</feature>
<feature type="binding site" evidence="1">
    <location>
        <position position="12"/>
    </location>
    <ligand>
        <name>[4Fe-4S] cluster</name>
        <dbReference type="ChEBI" id="CHEBI:49883"/>
        <label>1</label>
    </ligand>
</feature>
<feature type="binding site" evidence="1">
    <location>
        <position position="48"/>
    </location>
    <ligand>
        <name>[4Fe-4S] cluster</name>
        <dbReference type="ChEBI" id="CHEBI:49883"/>
        <label>1</label>
    </ligand>
</feature>
<feature type="binding site" evidence="1">
    <location>
        <position position="80"/>
    </location>
    <ligand>
        <name>[4Fe-4S] cluster</name>
        <dbReference type="ChEBI" id="CHEBI:49883"/>
        <label>1</label>
    </ligand>
</feature>
<feature type="binding site" evidence="1">
    <location>
        <position position="155"/>
    </location>
    <ligand>
        <name>[4Fe-4S] cluster</name>
        <dbReference type="ChEBI" id="CHEBI:49883"/>
        <label>2</label>
        <note>4Fe-4S-S-AdoMet</note>
    </ligand>
</feature>
<feature type="binding site" evidence="1">
    <location>
        <position position="159"/>
    </location>
    <ligand>
        <name>[4Fe-4S] cluster</name>
        <dbReference type="ChEBI" id="CHEBI:49883"/>
        <label>2</label>
        <note>4Fe-4S-S-AdoMet</note>
    </ligand>
</feature>
<feature type="binding site" evidence="1">
    <location>
        <position position="162"/>
    </location>
    <ligand>
        <name>[4Fe-4S] cluster</name>
        <dbReference type="ChEBI" id="CHEBI:49883"/>
        <label>2</label>
        <note>4Fe-4S-S-AdoMet</note>
    </ligand>
</feature>
<reference key="1">
    <citation type="journal article" date="2005" name="Proc. Natl. Acad. Sci. U.S.A.">
        <title>Complete genome sequencing of Anaplasma marginale reveals that the surface is skewed to two superfamilies of outer membrane proteins.</title>
        <authorList>
            <person name="Brayton K.A."/>
            <person name="Kappmeyer L.S."/>
            <person name="Herndon D.R."/>
            <person name="Dark M.J."/>
            <person name="Tibbals D.L."/>
            <person name="Palmer G.H."/>
            <person name="McGuire T.C."/>
            <person name="Knowles D.P. Jr."/>
        </authorList>
    </citation>
    <scope>NUCLEOTIDE SEQUENCE [LARGE SCALE GENOMIC DNA]</scope>
    <source>
        <strain>St. Maries</strain>
    </source>
</reference>
<name>MIAB_ANAMM</name>
<sequence length="455" mass="50623">MTKGLYIESYGCQMNVYDSLMVEDILRPLGFAAVQRPEDADIIMVNTCHVREKAAEKLYSALGRMRMLRKEGALIVVAGCVAQAEGEAVFERAPFVDVVVGPQSIHTLPELIMKATRDAKQMNVEFPAISKFDVISTDLLVSRGVSAFVSVQEGCDKFCTFCVVPYTRGPEYSRSVEDVLAEVRKLADGGTKEVVLLGQNVNAYHGTYKGNEWDLGRLIRKVAEVEGIERIRYTTSHPRDMHSSLYDAHKHEPKLLPCVHLPVQSGSDSVLRKMNRKHSVQEYMDIIDTLKEARSDIALSSDFIVGFPGETEEDFEATMDLVRHVGFATSYSFKYSPRPGTPGAEYTNQVPEEEKSSRLHRLQHLLLTQQRLFTKSMIGKTVSVLVCGTEGSRSCSNEVFGKSEHMQPVYISVDGDPAGYRNKIFSVKVLEEGARSSLKGIICTDTISLPPPHSM</sequence>
<organism>
    <name type="scientific">Anaplasma marginale (strain St. Maries)</name>
    <dbReference type="NCBI Taxonomy" id="234826"/>
    <lineage>
        <taxon>Bacteria</taxon>
        <taxon>Pseudomonadati</taxon>
        <taxon>Pseudomonadota</taxon>
        <taxon>Alphaproteobacteria</taxon>
        <taxon>Rickettsiales</taxon>
        <taxon>Anaplasmataceae</taxon>
        <taxon>Anaplasma</taxon>
    </lineage>
</organism>
<comment type="function">
    <text evidence="1">Catalyzes the methylthiolation of N6-(dimethylallyl)adenosine (i(6)A), leading to the formation of 2-methylthio-N6-(dimethylallyl)adenosine (ms(2)i(6)A) at position 37 in tRNAs that read codons beginning with uridine.</text>
</comment>
<comment type="catalytic activity">
    <reaction evidence="1">
        <text>N(6)-dimethylallyladenosine(37) in tRNA + (sulfur carrier)-SH + AH2 + 2 S-adenosyl-L-methionine = 2-methylsulfanyl-N(6)-dimethylallyladenosine(37) in tRNA + (sulfur carrier)-H + 5'-deoxyadenosine + L-methionine + A + S-adenosyl-L-homocysteine + 2 H(+)</text>
        <dbReference type="Rhea" id="RHEA:37067"/>
        <dbReference type="Rhea" id="RHEA-COMP:10375"/>
        <dbReference type="Rhea" id="RHEA-COMP:10376"/>
        <dbReference type="Rhea" id="RHEA-COMP:14737"/>
        <dbReference type="Rhea" id="RHEA-COMP:14739"/>
        <dbReference type="ChEBI" id="CHEBI:13193"/>
        <dbReference type="ChEBI" id="CHEBI:15378"/>
        <dbReference type="ChEBI" id="CHEBI:17319"/>
        <dbReference type="ChEBI" id="CHEBI:17499"/>
        <dbReference type="ChEBI" id="CHEBI:29917"/>
        <dbReference type="ChEBI" id="CHEBI:57844"/>
        <dbReference type="ChEBI" id="CHEBI:57856"/>
        <dbReference type="ChEBI" id="CHEBI:59789"/>
        <dbReference type="ChEBI" id="CHEBI:64428"/>
        <dbReference type="ChEBI" id="CHEBI:74415"/>
        <dbReference type="ChEBI" id="CHEBI:74417"/>
        <dbReference type="EC" id="2.8.4.3"/>
    </reaction>
</comment>
<comment type="cofactor">
    <cofactor evidence="1">
        <name>[4Fe-4S] cluster</name>
        <dbReference type="ChEBI" id="CHEBI:49883"/>
    </cofactor>
    <text evidence="1">Binds 2 [4Fe-4S] clusters. One cluster is coordinated with 3 cysteines and an exchangeable S-adenosyl-L-methionine.</text>
</comment>
<comment type="subunit">
    <text evidence="1">Monomer.</text>
</comment>
<comment type="subcellular location">
    <subcellularLocation>
        <location evidence="1">Cytoplasm</location>
    </subcellularLocation>
</comment>
<comment type="similarity">
    <text evidence="1">Belongs to the methylthiotransferase family. MiaB subfamily.</text>
</comment>
<dbReference type="EC" id="2.8.4.3" evidence="1"/>
<dbReference type="EMBL" id="CP000030">
    <property type="protein sequence ID" value="AAV86460.1"/>
    <property type="molecule type" value="Genomic_DNA"/>
</dbReference>
<dbReference type="RefSeq" id="WP_011114252.1">
    <property type="nucleotide sequence ID" value="NC_004842.2"/>
</dbReference>
<dbReference type="SMR" id="Q5PB69"/>
<dbReference type="KEGG" id="ama:AM401"/>
<dbReference type="HOGENOM" id="CLU_018697_2_0_5"/>
<dbReference type="GO" id="GO:0005829">
    <property type="term" value="C:cytosol"/>
    <property type="evidence" value="ECO:0007669"/>
    <property type="project" value="TreeGrafter"/>
</dbReference>
<dbReference type="GO" id="GO:0051539">
    <property type="term" value="F:4 iron, 4 sulfur cluster binding"/>
    <property type="evidence" value="ECO:0007669"/>
    <property type="project" value="UniProtKB-UniRule"/>
</dbReference>
<dbReference type="GO" id="GO:0046872">
    <property type="term" value="F:metal ion binding"/>
    <property type="evidence" value="ECO:0007669"/>
    <property type="project" value="UniProtKB-KW"/>
</dbReference>
<dbReference type="GO" id="GO:0035597">
    <property type="term" value="F:N6-isopentenyladenosine methylthiotransferase activity"/>
    <property type="evidence" value="ECO:0007669"/>
    <property type="project" value="TreeGrafter"/>
</dbReference>
<dbReference type="CDD" id="cd01335">
    <property type="entry name" value="Radical_SAM"/>
    <property type="match status" value="1"/>
</dbReference>
<dbReference type="FunFam" id="3.40.50.12160:FF:000003">
    <property type="entry name" value="CDK5 regulatory subunit-associated protein 1"/>
    <property type="match status" value="1"/>
</dbReference>
<dbReference type="FunFam" id="3.80.30.20:FF:000001">
    <property type="entry name" value="tRNA-2-methylthio-N(6)-dimethylallyladenosine synthase 2"/>
    <property type="match status" value="1"/>
</dbReference>
<dbReference type="Gene3D" id="3.40.50.12160">
    <property type="entry name" value="Methylthiotransferase, N-terminal domain"/>
    <property type="match status" value="1"/>
</dbReference>
<dbReference type="Gene3D" id="3.80.30.20">
    <property type="entry name" value="tm_1862 like domain"/>
    <property type="match status" value="1"/>
</dbReference>
<dbReference type="HAMAP" id="MF_01864">
    <property type="entry name" value="tRNA_metthiotr_MiaB"/>
    <property type="match status" value="1"/>
</dbReference>
<dbReference type="InterPro" id="IPR006638">
    <property type="entry name" value="Elp3/MiaA/NifB-like_rSAM"/>
</dbReference>
<dbReference type="InterPro" id="IPR005839">
    <property type="entry name" value="Methylthiotransferase"/>
</dbReference>
<dbReference type="InterPro" id="IPR020612">
    <property type="entry name" value="Methylthiotransferase_CS"/>
</dbReference>
<dbReference type="InterPro" id="IPR013848">
    <property type="entry name" value="Methylthiotransferase_N"/>
</dbReference>
<dbReference type="InterPro" id="IPR038135">
    <property type="entry name" value="Methylthiotransferase_N_sf"/>
</dbReference>
<dbReference type="InterPro" id="IPR006463">
    <property type="entry name" value="MiaB_methiolase"/>
</dbReference>
<dbReference type="InterPro" id="IPR007197">
    <property type="entry name" value="rSAM"/>
</dbReference>
<dbReference type="InterPro" id="IPR023404">
    <property type="entry name" value="rSAM_horseshoe"/>
</dbReference>
<dbReference type="NCBIfam" id="TIGR01574">
    <property type="entry name" value="miaB-methiolase"/>
    <property type="match status" value="1"/>
</dbReference>
<dbReference type="NCBIfam" id="TIGR00089">
    <property type="entry name" value="MiaB/RimO family radical SAM methylthiotransferase"/>
    <property type="match status" value="1"/>
</dbReference>
<dbReference type="PANTHER" id="PTHR43020">
    <property type="entry name" value="CDK5 REGULATORY SUBUNIT-ASSOCIATED PROTEIN 1"/>
    <property type="match status" value="1"/>
</dbReference>
<dbReference type="PANTHER" id="PTHR43020:SF2">
    <property type="entry name" value="MITOCHONDRIAL TRNA METHYLTHIOTRANSFERASE CDK5RAP1"/>
    <property type="match status" value="1"/>
</dbReference>
<dbReference type="Pfam" id="PF04055">
    <property type="entry name" value="Radical_SAM"/>
    <property type="match status" value="1"/>
</dbReference>
<dbReference type="Pfam" id="PF00919">
    <property type="entry name" value="UPF0004"/>
    <property type="match status" value="1"/>
</dbReference>
<dbReference type="SFLD" id="SFLDF00273">
    <property type="entry name" value="(dimethylallyl)adenosine_tRNA"/>
    <property type="match status" value="1"/>
</dbReference>
<dbReference type="SFLD" id="SFLDG01082">
    <property type="entry name" value="B12-binding_domain_containing"/>
    <property type="match status" value="1"/>
</dbReference>
<dbReference type="SFLD" id="SFLDG01061">
    <property type="entry name" value="methylthiotransferase"/>
    <property type="match status" value="1"/>
</dbReference>
<dbReference type="SMART" id="SM00729">
    <property type="entry name" value="Elp3"/>
    <property type="match status" value="1"/>
</dbReference>
<dbReference type="SUPFAM" id="SSF102114">
    <property type="entry name" value="Radical SAM enzymes"/>
    <property type="match status" value="1"/>
</dbReference>
<dbReference type="PROSITE" id="PS51449">
    <property type="entry name" value="MTTASE_N"/>
    <property type="match status" value="1"/>
</dbReference>
<dbReference type="PROSITE" id="PS01278">
    <property type="entry name" value="MTTASE_RADICAL"/>
    <property type="match status" value="1"/>
</dbReference>
<dbReference type="PROSITE" id="PS51918">
    <property type="entry name" value="RADICAL_SAM"/>
    <property type="match status" value="1"/>
</dbReference>
<accession>Q5PB69</accession>
<gene>
    <name evidence="1" type="primary">miaB</name>
    <name type="ordered locus">AM401</name>
</gene>
<keyword id="KW-0004">4Fe-4S</keyword>
<keyword id="KW-0963">Cytoplasm</keyword>
<keyword id="KW-0408">Iron</keyword>
<keyword id="KW-0411">Iron-sulfur</keyword>
<keyword id="KW-0479">Metal-binding</keyword>
<keyword id="KW-0949">S-adenosyl-L-methionine</keyword>
<keyword id="KW-0808">Transferase</keyword>
<keyword id="KW-0819">tRNA processing</keyword>